<feature type="chain" id="PRO_0000251629" description="Large ribosomal subunit protein uL16">
    <location>
        <begin position="1"/>
        <end position="141"/>
    </location>
</feature>
<reference key="1">
    <citation type="submission" date="2006-04" db="EMBL/GenBank/DDBJ databases">
        <title>Complete sequence of chromosome of Deinococcus geothermalis DSM 11300.</title>
        <authorList>
            <person name="Copeland A."/>
            <person name="Lucas S."/>
            <person name="Lapidus A."/>
            <person name="Barry K."/>
            <person name="Detter J.C."/>
            <person name="Glavina del Rio T."/>
            <person name="Hammon N."/>
            <person name="Israni S."/>
            <person name="Dalin E."/>
            <person name="Tice H."/>
            <person name="Pitluck S."/>
            <person name="Brettin T."/>
            <person name="Bruce D."/>
            <person name="Han C."/>
            <person name="Tapia R."/>
            <person name="Saunders E."/>
            <person name="Gilna P."/>
            <person name="Schmutz J."/>
            <person name="Larimer F."/>
            <person name="Land M."/>
            <person name="Hauser L."/>
            <person name="Kyrpides N."/>
            <person name="Kim E."/>
            <person name="Daly M.J."/>
            <person name="Fredrickson J.K."/>
            <person name="Makarova K.S."/>
            <person name="Gaidamakova E.K."/>
            <person name="Zhai M."/>
            <person name="Richardson P."/>
        </authorList>
    </citation>
    <scope>NUCLEOTIDE SEQUENCE [LARGE SCALE GENOMIC DNA]</scope>
    <source>
        <strain>DSM 11300 / CIP 105573 / AG-3a</strain>
    </source>
</reference>
<accession>Q1IX79</accession>
<gene>
    <name evidence="1" type="primary">rplP</name>
    <name type="ordered locus">Dgeo_1860</name>
</gene>
<comment type="function">
    <text evidence="1">Binds 23S rRNA and is also seen to make contacts with the A and possibly P site tRNAs.</text>
</comment>
<comment type="subunit">
    <text evidence="1">Part of the 50S ribosomal subunit.</text>
</comment>
<comment type="similarity">
    <text evidence="1">Belongs to the universal ribosomal protein uL16 family.</text>
</comment>
<keyword id="KW-0687">Ribonucleoprotein</keyword>
<keyword id="KW-0689">Ribosomal protein</keyword>
<keyword id="KW-0694">RNA-binding</keyword>
<keyword id="KW-0699">rRNA-binding</keyword>
<keyword id="KW-0820">tRNA-binding</keyword>
<organism>
    <name type="scientific">Deinococcus geothermalis (strain DSM 11300 / CIP 105573 / AG-3a)</name>
    <dbReference type="NCBI Taxonomy" id="319795"/>
    <lineage>
        <taxon>Bacteria</taxon>
        <taxon>Thermotogati</taxon>
        <taxon>Deinococcota</taxon>
        <taxon>Deinococci</taxon>
        <taxon>Deinococcales</taxon>
        <taxon>Deinococcaceae</taxon>
        <taxon>Deinococcus</taxon>
    </lineage>
</organism>
<sequence length="141" mass="16153">MLLPKRTKYRKQFRGRMTGDTKGGDYVAFGDYGLVALEPAWIKSNQIEACRIVMSRHFRRGGKIYIRIFPDKPVTKKPAETRMGKGKGAVEYWVSVVKPGRVMFEVSGVTEEQAREAFRLAGHKLPIQTKMVKREVYDEAQ</sequence>
<protein>
    <recommendedName>
        <fullName evidence="1">Large ribosomal subunit protein uL16</fullName>
    </recommendedName>
    <alternativeName>
        <fullName evidence="2">50S ribosomal protein L16</fullName>
    </alternativeName>
</protein>
<name>RL16_DEIGD</name>
<dbReference type="EMBL" id="CP000359">
    <property type="protein sequence ID" value="ABF46155.1"/>
    <property type="molecule type" value="Genomic_DNA"/>
</dbReference>
<dbReference type="RefSeq" id="WP_011530985.1">
    <property type="nucleotide sequence ID" value="NC_008025.1"/>
</dbReference>
<dbReference type="SMR" id="Q1IX79"/>
<dbReference type="STRING" id="319795.Dgeo_1860"/>
<dbReference type="KEGG" id="dge:Dgeo_1860"/>
<dbReference type="eggNOG" id="COG0197">
    <property type="taxonomic scope" value="Bacteria"/>
</dbReference>
<dbReference type="HOGENOM" id="CLU_078858_2_1_0"/>
<dbReference type="Proteomes" id="UP000002431">
    <property type="component" value="Chromosome"/>
</dbReference>
<dbReference type="GO" id="GO:0022625">
    <property type="term" value="C:cytosolic large ribosomal subunit"/>
    <property type="evidence" value="ECO:0007669"/>
    <property type="project" value="TreeGrafter"/>
</dbReference>
<dbReference type="GO" id="GO:0019843">
    <property type="term" value="F:rRNA binding"/>
    <property type="evidence" value="ECO:0007669"/>
    <property type="project" value="UniProtKB-UniRule"/>
</dbReference>
<dbReference type="GO" id="GO:0003735">
    <property type="term" value="F:structural constituent of ribosome"/>
    <property type="evidence" value="ECO:0007669"/>
    <property type="project" value="InterPro"/>
</dbReference>
<dbReference type="GO" id="GO:0000049">
    <property type="term" value="F:tRNA binding"/>
    <property type="evidence" value="ECO:0007669"/>
    <property type="project" value="UniProtKB-KW"/>
</dbReference>
<dbReference type="GO" id="GO:0006412">
    <property type="term" value="P:translation"/>
    <property type="evidence" value="ECO:0007669"/>
    <property type="project" value="UniProtKB-UniRule"/>
</dbReference>
<dbReference type="CDD" id="cd01433">
    <property type="entry name" value="Ribosomal_L16_L10e"/>
    <property type="match status" value="1"/>
</dbReference>
<dbReference type="FunFam" id="3.90.1170.10:FF:000001">
    <property type="entry name" value="50S ribosomal protein L16"/>
    <property type="match status" value="1"/>
</dbReference>
<dbReference type="Gene3D" id="3.90.1170.10">
    <property type="entry name" value="Ribosomal protein L10e/L16"/>
    <property type="match status" value="1"/>
</dbReference>
<dbReference type="HAMAP" id="MF_01342">
    <property type="entry name" value="Ribosomal_uL16"/>
    <property type="match status" value="1"/>
</dbReference>
<dbReference type="InterPro" id="IPR047873">
    <property type="entry name" value="Ribosomal_uL16"/>
</dbReference>
<dbReference type="InterPro" id="IPR000114">
    <property type="entry name" value="Ribosomal_uL16_bact-type"/>
</dbReference>
<dbReference type="InterPro" id="IPR020798">
    <property type="entry name" value="Ribosomal_uL16_CS"/>
</dbReference>
<dbReference type="InterPro" id="IPR016180">
    <property type="entry name" value="Ribosomal_uL16_dom"/>
</dbReference>
<dbReference type="InterPro" id="IPR036920">
    <property type="entry name" value="Ribosomal_uL16_sf"/>
</dbReference>
<dbReference type="NCBIfam" id="TIGR01164">
    <property type="entry name" value="rplP_bact"/>
    <property type="match status" value="1"/>
</dbReference>
<dbReference type="PANTHER" id="PTHR12220">
    <property type="entry name" value="50S/60S RIBOSOMAL PROTEIN L16"/>
    <property type="match status" value="1"/>
</dbReference>
<dbReference type="PANTHER" id="PTHR12220:SF13">
    <property type="entry name" value="LARGE RIBOSOMAL SUBUNIT PROTEIN UL16M"/>
    <property type="match status" value="1"/>
</dbReference>
<dbReference type="Pfam" id="PF00252">
    <property type="entry name" value="Ribosomal_L16"/>
    <property type="match status" value="1"/>
</dbReference>
<dbReference type="PRINTS" id="PR00060">
    <property type="entry name" value="RIBOSOMALL16"/>
</dbReference>
<dbReference type="SUPFAM" id="SSF54686">
    <property type="entry name" value="Ribosomal protein L16p/L10e"/>
    <property type="match status" value="1"/>
</dbReference>
<dbReference type="PROSITE" id="PS00586">
    <property type="entry name" value="RIBOSOMAL_L16_1"/>
    <property type="match status" value="1"/>
</dbReference>
<dbReference type="PROSITE" id="PS00701">
    <property type="entry name" value="RIBOSOMAL_L16_2"/>
    <property type="match status" value="1"/>
</dbReference>
<evidence type="ECO:0000255" key="1">
    <source>
        <dbReference type="HAMAP-Rule" id="MF_01342"/>
    </source>
</evidence>
<evidence type="ECO:0000305" key="2"/>
<proteinExistence type="inferred from homology"/>